<proteinExistence type="inferred from homology"/>
<protein>
    <recommendedName>
        <fullName>Phosphate transport system permease protein PstA</fullName>
    </recommendedName>
</protein>
<sequence>MSTASQHLYKRRRLINATAITISCIAALFGLFFLIWILWTLISKGLPGIGLDLFTKITPPPMQKGGLANAFFGSAIMCLLAIVIGTPLGIAAGTWLAEYGNTSKTSAVVRFVNDILLSAPSIVLGLFVYTLYVMHTGGHFSAFSGALALVFIVLPIVVRTTDEMLRLVPGQMREAALSLGIPQWKMIIQVLYRSASAGILTGILLALARISGETAPLLFTAFGNQYWSSNIFQPIASLPLVMNQFASSPYKSWQLLAWSGALVLTVFVLLVSLGARTLLLRNKIPNE</sequence>
<gene>
    <name type="primary">pstA</name>
    <name type="ordered locus">XF_2143</name>
</gene>
<evidence type="ECO:0000250" key="1"/>
<evidence type="ECO:0000255" key="2">
    <source>
        <dbReference type="PROSITE-ProRule" id="PRU00441"/>
    </source>
</evidence>
<evidence type="ECO:0000305" key="3"/>
<feature type="chain" id="PRO_0000060197" description="Phosphate transport system permease protein PstA">
    <location>
        <begin position="1"/>
        <end position="287"/>
    </location>
</feature>
<feature type="transmembrane region" description="Helical" evidence="2">
    <location>
        <begin position="22"/>
        <end position="42"/>
    </location>
</feature>
<feature type="transmembrane region" description="Helical" evidence="2">
    <location>
        <begin position="70"/>
        <end position="90"/>
    </location>
</feature>
<feature type="transmembrane region" description="Helical" evidence="2">
    <location>
        <begin position="115"/>
        <end position="135"/>
    </location>
</feature>
<feature type="transmembrane region" description="Helical" evidence="2">
    <location>
        <begin position="138"/>
        <end position="158"/>
    </location>
</feature>
<feature type="transmembrane region" description="Helical" evidence="2">
    <location>
        <begin position="187"/>
        <end position="207"/>
    </location>
</feature>
<feature type="transmembrane region" description="Helical" evidence="2">
    <location>
        <begin position="255"/>
        <end position="275"/>
    </location>
</feature>
<feature type="domain" description="ABC transmembrane type-1" evidence="2">
    <location>
        <begin position="71"/>
        <end position="275"/>
    </location>
</feature>
<dbReference type="EMBL" id="AE003849">
    <property type="protein sequence ID" value="AAF84942.1"/>
    <property type="molecule type" value="Genomic_DNA"/>
</dbReference>
<dbReference type="PIR" id="C82593">
    <property type="entry name" value="C82593"/>
</dbReference>
<dbReference type="RefSeq" id="WP_010894592.1">
    <property type="nucleotide sequence ID" value="NC_002488.3"/>
</dbReference>
<dbReference type="SMR" id="Q9PBK1"/>
<dbReference type="STRING" id="160492.XF_2143"/>
<dbReference type="KEGG" id="xfa:XF_2143"/>
<dbReference type="eggNOG" id="COG0581">
    <property type="taxonomic scope" value="Bacteria"/>
</dbReference>
<dbReference type="HOGENOM" id="CLU_033621_2_0_6"/>
<dbReference type="Proteomes" id="UP000000812">
    <property type="component" value="Chromosome"/>
</dbReference>
<dbReference type="GO" id="GO:0005886">
    <property type="term" value="C:plasma membrane"/>
    <property type="evidence" value="ECO:0007669"/>
    <property type="project" value="UniProtKB-SubCell"/>
</dbReference>
<dbReference type="GO" id="GO:0005315">
    <property type="term" value="F:phosphate transmembrane transporter activity"/>
    <property type="evidence" value="ECO:0007669"/>
    <property type="project" value="InterPro"/>
</dbReference>
<dbReference type="GO" id="GO:0035435">
    <property type="term" value="P:phosphate ion transmembrane transport"/>
    <property type="evidence" value="ECO:0007669"/>
    <property type="project" value="InterPro"/>
</dbReference>
<dbReference type="CDD" id="cd06261">
    <property type="entry name" value="TM_PBP2"/>
    <property type="match status" value="1"/>
</dbReference>
<dbReference type="Gene3D" id="1.10.3720.10">
    <property type="entry name" value="MetI-like"/>
    <property type="match status" value="1"/>
</dbReference>
<dbReference type="InterPro" id="IPR000515">
    <property type="entry name" value="MetI-like"/>
</dbReference>
<dbReference type="InterPro" id="IPR035906">
    <property type="entry name" value="MetI-like_sf"/>
</dbReference>
<dbReference type="InterPro" id="IPR005672">
    <property type="entry name" value="Phosphate_PstA"/>
</dbReference>
<dbReference type="InterPro" id="IPR051408">
    <property type="entry name" value="Phosphate_transprt_permease"/>
</dbReference>
<dbReference type="NCBIfam" id="TIGR00974">
    <property type="entry name" value="3a0107s02c"/>
    <property type="match status" value="1"/>
</dbReference>
<dbReference type="PANTHER" id="PTHR42922">
    <property type="entry name" value="PHOSPHATE TRANSPORT SYSTEM PERMEASE PROTEIN PSTA"/>
    <property type="match status" value="1"/>
</dbReference>
<dbReference type="PANTHER" id="PTHR42922:SF1">
    <property type="entry name" value="PHOSPHATE TRANSPORT SYSTEM PERMEASE PROTEIN PSTA"/>
    <property type="match status" value="1"/>
</dbReference>
<dbReference type="Pfam" id="PF00528">
    <property type="entry name" value="BPD_transp_1"/>
    <property type="match status" value="1"/>
</dbReference>
<dbReference type="SUPFAM" id="SSF161098">
    <property type="entry name" value="MetI-like"/>
    <property type="match status" value="1"/>
</dbReference>
<dbReference type="PROSITE" id="PS50928">
    <property type="entry name" value="ABC_TM1"/>
    <property type="match status" value="1"/>
</dbReference>
<organism>
    <name type="scientific">Xylella fastidiosa (strain 9a5c)</name>
    <dbReference type="NCBI Taxonomy" id="160492"/>
    <lineage>
        <taxon>Bacteria</taxon>
        <taxon>Pseudomonadati</taxon>
        <taxon>Pseudomonadota</taxon>
        <taxon>Gammaproteobacteria</taxon>
        <taxon>Lysobacterales</taxon>
        <taxon>Lysobacteraceae</taxon>
        <taxon>Xylella</taxon>
    </lineage>
</organism>
<reference key="1">
    <citation type="journal article" date="2000" name="Nature">
        <title>The genome sequence of the plant pathogen Xylella fastidiosa.</title>
        <authorList>
            <person name="Simpson A.J.G."/>
            <person name="Reinach F.C."/>
            <person name="Arruda P."/>
            <person name="Abreu F.A."/>
            <person name="Acencio M."/>
            <person name="Alvarenga R."/>
            <person name="Alves L.M.C."/>
            <person name="Araya J.E."/>
            <person name="Baia G.S."/>
            <person name="Baptista C.S."/>
            <person name="Barros M.H."/>
            <person name="Bonaccorsi E.D."/>
            <person name="Bordin S."/>
            <person name="Bove J.M."/>
            <person name="Briones M.R.S."/>
            <person name="Bueno M.R.P."/>
            <person name="Camargo A.A."/>
            <person name="Camargo L.E.A."/>
            <person name="Carraro D.M."/>
            <person name="Carrer H."/>
            <person name="Colauto N.B."/>
            <person name="Colombo C."/>
            <person name="Costa F.F."/>
            <person name="Costa M.C.R."/>
            <person name="Costa-Neto C.M."/>
            <person name="Coutinho L.L."/>
            <person name="Cristofani M."/>
            <person name="Dias-Neto E."/>
            <person name="Docena C."/>
            <person name="El-Dorry H."/>
            <person name="Facincani A.P."/>
            <person name="Ferreira A.J.S."/>
            <person name="Ferreira V.C.A."/>
            <person name="Ferro J.A."/>
            <person name="Fraga J.S."/>
            <person name="Franca S.C."/>
            <person name="Franco M.C."/>
            <person name="Frohme M."/>
            <person name="Furlan L.R."/>
            <person name="Garnier M."/>
            <person name="Goldman G.H."/>
            <person name="Goldman M.H.S."/>
            <person name="Gomes S.L."/>
            <person name="Gruber A."/>
            <person name="Ho P.L."/>
            <person name="Hoheisel J.D."/>
            <person name="Junqueira M.L."/>
            <person name="Kemper E.L."/>
            <person name="Kitajima J.P."/>
            <person name="Krieger J.E."/>
            <person name="Kuramae E.E."/>
            <person name="Laigret F."/>
            <person name="Lambais M.R."/>
            <person name="Leite L.C.C."/>
            <person name="Lemos E.G.M."/>
            <person name="Lemos M.V.F."/>
            <person name="Lopes S.A."/>
            <person name="Lopes C.R."/>
            <person name="Machado J.A."/>
            <person name="Machado M.A."/>
            <person name="Madeira A.M.B.N."/>
            <person name="Madeira H.M.F."/>
            <person name="Marino C.L."/>
            <person name="Marques M.V."/>
            <person name="Martins E.A.L."/>
            <person name="Martins E.M.F."/>
            <person name="Matsukuma A.Y."/>
            <person name="Menck C.F.M."/>
            <person name="Miracca E.C."/>
            <person name="Miyaki C.Y."/>
            <person name="Monteiro-Vitorello C.B."/>
            <person name="Moon D.H."/>
            <person name="Nagai M.A."/>
            <person name="Nascimento A.L.T.O."/>
            <person name="Netto L.E.S."/>
            <person name="Nhani A. Jr."/>
            <person name="Nobrega F.G."/>
            <person name="Nunes L.R."/>
            <person name="Oliveira M.A."/>
            <person name="de Oliveira M.C."/>
            <person name="de Oliveira R.C."/>
            <person name="Palmieri D.A."/>
            <person name="Paris A."/>
            <person name="Peixoto B.R."/>
            <person name="Pereira G.A.G."/>
            <person name="Pereira H.A. Jr."/>
            <person name="Pesquero J.B."/>
            <person name="Quaggio R.B."/>
            <person name="Roberto P.G."/>
            <person name="Rodrigues V."/>
            <person name="de Rosa A.J.M."/>
            <person name="de Rosa V.E. Jr."/>
            <person name="de Sa R.G."/>
            <person name="Santelli R.V."/>
            <person name="Sawasaki H.E."/>
            <person name="da Silva A.C.R."/>
            <person name="da Silva A.M."/>
            <person name="da Silva F.R."/>
            <person name="Silva W.A. Jr."/>
            <person name="da Silveira J.F."/>
            <person name="Silvestri M.L.Z."/>
            <person name="Siqueira W.J."/>
            <person name="de Souza A.A."/>
            <person name="de Souza A.P."/>
            <person name="Terenzi M.F."/>
            <person name="Truffi D."/>
            <person name="Tsai S.M."/>
            <person name="Tsuhako M.H."/>
            <person name="Vallada H."/>
            <person name="Van Sluys M.A."/>
            <person name="Verjovski-Almeida S."/>
            <person name="Vettore A.L."/>
            <person name="Zago M.A."/>
            <person name="Zatz M."/>
            <person name="Meidanis J."/>
            <person name="Setubal J.C."/>
        </authorList>
    </citation>
    <scope>NUCLEOTIDE SEQUENCE [LARGE SCALE GENOMIC DNA]</scope>
    <source>
        <strain>9a5c</strain>
    </source>
</reference>
<comment type="function">
    <text evidence="1">Part of a binding-protein-dependent transport system for phosphate; probably responsible for the translocation of the substrate across the membrane.</text>
</comment>
<comment type="subcellular location">
    <subcellularLocation>
        <location evidence="1">Cell inner membrane</location>
        <topology evidence="2">Multi-pass membrane protein</topology>
    </subcellularLocation>
</comment>
<comment type="similarity">
    <text evidence="3">Belongs to the binding-protein-dependent transport system permease family. CysTW subfamily.</text>
</comment>
<accession>Q9PBK1</accession>
<keyword id="KW-0997">Cell inner membrane</keyword>
<keyword id="KW-1003">Cell membrane</keyword>
<keyword id="KW-0472">Membrane</keyword>
<keyword id="KW-0592">Phosphate transport</keyword>
<keyword id="KW-0812">Transmembrane</keyword>
<keyword id="KW-1133">Transmembrane helix</keyword>
<keyword id="KW-0813">Transport</keyword>
<name>PSTA_XYLFA</name>